<dbReference type="EC" id="2.1.2.13" evidence="1"/>
<dbReference type="EC" id="1.1.1.305" evidence="1"/>
<dbReference type="EMBL" id="FM180568">
    <property type="protein sequence ID" value="CAS09947.1"/>
    <property type="molecule type" value="Genomic_DNA"/>
</dbReference>
<dbReference type="RefSeq" id="WP_000860292.1">
    <property type="nucleotide sequence ID" value="NC_011601.1"/>
</dbReference>
<dbReference type="SMR" id="B7UFR7"/>
<dbReference type="KEGG" id="ecg:E2348C_2399"/>
<dbReference type="HOGENOM" id="CLU_007383_23_2_6"/>
<dbReference type="UniPathway" id="UPA00030"/>
<dbReference type="UniPathway" id="UPA00032">
    <property type="reaction ID" value="UER00492"/>
</dbReference>
<dbReference type="UniPathway" id="UPA00032">
    <property type="reaction ID" value="UER00494"/>
</dbReference>
<dbReference type="Proteomes" id="UP000008205">
    <property type="component" value="Chromosome"/>
</dbReference>
<dbReference type="GO" id="GO:0016020">
    <property type="term" value="C:membrane"/>
    <property type="evidence" value="ECO:0007669"/>
    <property type="project" value="GOC"/>
</dbReference>
<dbReference type="GO" id="GO:0016831">
    <property type="term" value="F:carboxy-lyase activity"/>
    <property type="evidence" value="ECO:0007669"/>
    <property type="project" value="InterPro"/>
</dbReference>
<dbReference type="GO" id="GO:0099619">
    <property type="term" value="F:UDP-4-amino-4-deoxy-L-arabinose formyltransferase activity"/>
    <property type="evidence" value="ECO:0007669"/>
    <property type="project" value="UniProtKB-EC"/>
</dbReference>
<dbReference type="GO" id="GO:0099618">
    <property type="term" value="F:UDP-glucuronate dehydrogenase activity"/>
    <property type="evidence" value="ECO:0007669"/>
    <property type="project" value="UniProtKB-EC"/>
</dbReference>
<dbReference type="GO" id="GO:0009245">
    <property type="term" value="P:lipid A biosynthetic process"/>
    <property type="evidence" value="ECO:0007669"/>
    <property type="project" value="UniProtKB-KW"/>
</dbReference>
<dbReference type="GO" id="GO:0009103">
    <property type="term" value="P:lipopolysaccharide biosynthetic process"/>
    <property type="evidence" value="ECO:0007669"/>
    <property type="project" value="UniProtKB-UniRule"/>
</dbReference>
<dbReference type="GO" id="GO:0046677">
    <property type="term" value="P:response to antibiotic"/>
    <property type="evidence" value="ECO:0007669"/>
    <property type="project" value="UniProtKB-KW"/>
</dbReference>
<dbReference type="CDD" id="cd08702">
    <property type="entry name" value="Arna_FMT_C"/>
    <property type="match status" value="1"/>
</dbReference>
<dbReference type="CDD" id="cd05257">
    <property type="entry name" value="Arna_like_SDR_e"/>
    <property type="match status" value="1"/>
</dbReference>
<dbReference type="CDD" id="cd08644">
    <property type="entry name" value="FMT_core_ArnA_N"/>
    <property type="match status" value="1"/>
</dbReference>
<dbReference type="FunFam" id="3.40.50.12230:FF:000002">
    <property type="entry name" value="Bifunctional polymyxin resistance protein ArnA"/>
    <property type="match status" value="1"/>
</dbReference>
<dbReference type="FunFam" id="3.40.50.720:FF:000197">
    <property type="entry name" value="Bifunctional polymyxin resistance protein ArnA"/>
    <property type="match status" value="1"/>
</dbReference>
<dbReference type="Gene3D" id="3.40.50.12230">
    <property type="match status" value="1"/>
</dbReference>
<dbReference type="Gene3D" id="3.40.50.720">
    <property type="entry name" value="NAD(P)-binding Rossmann-like Domain"/>
    <property type="match status" value="1"/>
</dbReference>
<dbReference type="HAMAP" id="MF_01166">
    <property type="entry name" value="ArnA"/>
    <property type="match status" value="1"/>
</dbReference>
<dbReference type="InterPro" id="IPR045869">
    <property type="entry name" value="Arna-like_SDR_e"/>
</dbReference>
<dbReference type="InterPro" id="IPR021168">
    <property type="entry name" value="Bifun_polymyxin_resist_ArnA"/>
</dbReference>
<dbReference type="InterPro" id="IPR001509">
    <property type="entry name" value="Epimerase_deHydtase"/>
</dbReference>
<dbReference type="InterPro" id="IPR005793">
    <property type="entry name" value="Formyl_trans_C"/>
</dbReference>
<dbReference type="InterPro" id="IPR002376">
    <property type="entry name" value="Formyl_transf_N"/>
</dbReference>
<dbReference type="InterPro" id="IPR036477">
    <property type="entry name" value="Formyl_transf_N_sf"/>
</dbReference>
<dbReference type="InterPro" id="IPR011034">
    <property type="entry name" value="Formyl_transferase-like_C_sf"/>
</dbReference>
<dbReference type="InterPro" id="IPR050177">
    <property type="entry name" value="Lipid_A_modif_metabolic_enz"/>
</dbReference>
<dbReference type="InterPro" id="IPR036291">
    <property type="entry name" value="NAD(P)-bd_dom_sf"/>
</dbReference>
<dbReference type="NCBIfam" id="NF005414">
    <property type="entry name" value="PRK06988.1"/>
    <property type="match status" value="1"/>
</dbReference>
<dbReference type="NCBIfam" id="NF005998">
    <property type="entry name" value="PRK08125.1"/>
    <property type="match status" value="1"/>
</dbReference>
<dbReference type="NCBIfam" id="NF008872">
    <property type="entry name" value="PRK11908.1"/>
    <property type="match status" value="1"/>
</dbReference>
<dbReference type="PANTHER" id="PTHR43245">
    <property type="entry name" value="BIFUNCTIONAL POLYMYXIN RESISTANCE PROTEIN ARNA"/>
    <property type="match status" value="1"/>
</dbReference>
<dbReference type="PANTHER" id="PTHR43245:SF13">
    <property type="entry name" value="UDP-D-APIOSE_UDP-D-XYLOSE SYNTHASE 2"/>
    <property type="match status" value="1"/>
</dbReference>
<dbReference type="Pfam" id="PF01370">
    <property type="entry name" value="Epimerase"/>
    <property type="match status" value="1"/>
</dbReference>
<dbReference type="Pfam" id="PF02911">
    <property type="entry name" value="Formyl_trans_C"/>
    <property type="match status" value="1"/>
</dbReference>
<dbReference type="Pfam" id="PF00551">
    <property type="entry name" value="Formyl_trans_N"/>
    <property type="match status" value="1"/>
</dbReference>
<dbReference type="PIRSF" id="PIRSF036506">
    <property type="entry name" value="Bifun_polymyxin_resist_ArnA"/>
    <property type="match status" value="1"/>
</dbReference>
<dbReference type="SUPFAM" id="SSF50486">
    <property type="entry name" value="FMT C-terminal domain-like"/>
    <property type="match status" value="1"/>
</dbReference>
<dbReference type="SUPFAM" id="SSF53328">
    <property type="entry name" value="Formyltransferase"/>
    <property type="match status" value="1"/>
</dbReference>
<dbReference type="SUPFAM" id="SSF51735">
    <property type="entry name" value="NAD(P)-binding Rossmann-fold domains"/>
    <property type="match status" value="1"/>
</dbReference>
<gene>
    <name evidence="1" type="primary">arnA</name>
    <name type="ordered locus">E2348C_2399</name>
</gene>
<sequence length="660" mass="74359">MKTVVFAYHDMGCLGIEALLAAGYEISAIFTHTDNPGEKAFYGSVARLAAERGIPVYAPDNVNHPLWVERIAQLSPEVIFSFYYRHLICDEILQLAPRGAFNLHGSLLPKYRGRAPLNWVLVNGETETGVTLHRMVKRADAGAIVAQLRVAIAPDDIAITLHHKLCHAARQLLEQTLPAIKHGNILEIAQRENEATCFGRRTPDDSFLEWHKPASVLHNMVRAVADPWPGAFSYVGNQKFTVWSSRVHPHASKAQPGSVISVAPLLIACGDGALEIVTGQTGDGITMQGSQLAQTLGLVQGSRLNSQPACAARRRTRVLILGVNGFIGNHLTERLLREDHYEVYGLDIGSDAISRFLNHPHFHFVEGDISIHSEWIEYHVKKCDVVLPLVAIATPIEYTRNPLRVFELDFEENLRIIRYCVKYRKRIIFPSTSEVYGMCSDKYFDEDHSNLIVGPVNKPRWIYSVSKQLIDRVIWAYGEKEGLQFTLFRPFNWMGPRLDNLNAARIGSSRAITQLILNLVEGSPIKLIDGGKQKRCFTDIRDGIEALYRIIENAGNRCDGEIINIGNPENEASIEELGEMLLASFEKHPLRHYFPPFAGFRVVESSSYYGKGYQDVEHRKPSIRNARRCLDWEPKIDMQETIDETLDFFLRTVDLTDKPS</sequence>
<accession>B7UFR7</accession>
<feature type="chain" id="PRO_0000379985" description="Bifunctional polymyxin resistance protein ArnA">
    <location>
        <begin position="1"/>
        <end position="660"/>
    </location>
</feature>
<feature type="region of interest" description="Formyltransferase ArnAFT">
    <location>
        <begin position="1"/>
        <end position="304"/>
    </location>
</feature>
<feature type="region of interest" description="Dehydrogenase ArnADH">
    <location>
        <begin position="314"/>
        <end position="660"/>
    </location>
</feature>
<feature type="active site" description="Proton donor; for formyltransferase activity" evidence="1">
    <location>
        <position position="104"/>
    </location>
</feature>
<feature type="active site" description="Proton acceptor; for decarboxylase activity" evidence="1">
    <location>
        <position position="434"/>
    </location>
</feature>
<feature type="active site" description="Proton donor; for decarboxylase activity" evidence="1">
    <location>
        <position position="619"/>
    </location>
</feature>
<feature type="binding site" evidence="1">
    <location>
        <begin position="86"/>
        <end position="88"/>
    </location>
    <ligand>
        <name>(6R)-10-formyltetrahydrofolate</name>
        <dbReference type="ChEBI" id="CHEBI:195366"/>
    </ligand>
</feature>
<feature type="binding site" evidence="1">
    <location>
        <position position="114"/>
    </location>
    <ligand>
        <name>(6R)-10-formyltetrahydrofolate</name>
        <dbReference type="ChEBI" id="CHEBI:195366"/>
    </ligand>
</feature>
<feature type="binding site" evidence="1">
    <location>
        <begin position="136"/>
        <end position="140"/>
    </location>
    <ligand>
        <name>(6R)-10-formyltetrahydrofolate</name>
        <dbReference type="ChEBI" id="CHEBI:195366"/>
    </ligand>
</feature>
<feature type="binding site" evidence="1">
    <location>
        <position position="347"/>
    </location>
    <ligand>
        <name>NAD(+)</name>
        <dbReference type="ChEBI" id="CHEBI:57540"/>
    </ligand>
</feature>
<feature type="binding site" evidence="1">
    <location>
        <begin position="368"/>
        <end position="369"/>
    </location>
    <ligand>
        <name>NAD(+)</name>
        <dbReference type="ChEBI" id="CHEBI:57540"/>
    </ligand>
</feature>
<feature type="binding site" evidence="1">
    <location>
        <position position="393"/>
    </location>
    <ligand>
        <name>UDP-alpha-D-glucuronate</name>
        <dbReference type="ChEBI" id="CHEBI:58052"/>
    </ligand>
</feature>
<feature type="binding site" evidence="1">
    <location>
        <position position="398"/>
    </location>
    <ligand>
        <name>UDP-alpha-D-glucuronate</name>
        <dbReference type="ChEBI" id="CHEBI:58052"/>
    </ligand>
</feature>
<feature type="binding site" evidence="1">
    <location>
        <begin position="432"/>
        <end position="433"/>
    </location>
    <ligand>
        <name>UDP-alpha-D-glucuronate</name>
        <dbReference type="ChEBI" id="CHEBI:58052"/>
    </ligand>
</feature>
<feature type="binding site" evidence="1">
    <location>
        <position position="460"/>
    </location>
    <ligand>
        <name>UDP-alpha-D-glucuronate</name>
        <dbReference type="ChEBI" id="CHEBI:58052"/>
    </ligand>
</feature>
<feature type="binding site" evidence="1">
    <location>
        <position position="492"/>
    </location>
    <ligand>
        <name>UDP-alpha-D-glucuronate</name>
        <dbReference type="ChEBI" id="CHEBI:58052"/>
    </ligand>
</feature>
<feature type="binding site" evidence="1">
    <location>
        <begin position="526"/>
        <end position="535"/>
    </location>
    <ligand>
        <name>UDP-alpha-D-glucuronate</name>
        <dbReference type="ChEBI" id="CHEBI:58052"/>
    </ligand>
</feature>
<feature type="binding site" evidence="1">
    <location>
        <position position="613"/>
    </location>
    <ligand>
        <name>UDP-alpha-D-glucuronate</name>
        <dbReference type="ChEBI" id="CHEBI:58052"/>
    </ligand>
</feature>
<feature type="site" description="Transition state stabilizer" evidence="1">
    <location>
        <position position="102"/>
    </location>
</feature>
<feature type="site" description="Raises pKa of active site His" evidence="1">
    <location>
        <position position="140"/>
    </location>
</feature>
<protein>
    <recommendedName>
        <fullName evidence="1">Bifunctional polymyxin resistance protein ArnA</fullName>
    </recommendedName>
    <domain>
        <recommendedName>
            <fullName evidence="1">UDP-4-amino-4-deoxy-L-arabinose formyltransferase</fullName>
            <ecNumber evidence="1">2.1.2.13</ecNumber>
        </recommendedName>
        <alternativeName>
            <fullName evidence="1">ArnAFT</fullName>
        </alternativeName>
        <alternativeName>
            <fullName evidence="1">UDP-L-Ara4N formyltransferase</fullName>
        </alternativeName>
    </domain>
    <domain>
        <recommendedName>
            <fullName evidence="1">UDP-glucuronic acid oxidase, UDP-4-keto-hexauronic acid decarboxylating</fullName>
            <ecNumber evidence="1">1.1.1.305</ecNumber>
        </recommendedName>
        <alternativeName>
            <fullName evidence="1">ArnADH</fullName>
        </alternativeName>
        <alternativeName>
            <fullName evidence="1">UDP-GlcUA decarboxylase</fullName>
        </alternativeName>
        <alternativeName>
            <fullName evidence="1">UDP-glucuronic acid dehydrogenase</fullName>
        </alternativeName>
    </domain>
</protein>
<name>ARNA_ECO27</name>
<keyword id="KW-0046">Antibiotic resistance</keyword>
<keyword id="KW-0441">Lipid A biosynthesis</keyword>
<keyword id="KW-0444">Lipid biosynthesis</keyword>
<keyword id="KW-0443">Lipid metabolism</keyword>
<keyword id="KW-0448">Lipopolysaccharide biosynthesis</keyword>
<keyword id="KW-0511">Multifunctional enzyme</keyword>
<keyword id="KW-0520">NAD</keyword>
<keyword id="KW-0560">Oxidoreductase</keyword>
<keyword id="KW-1185">Reference proteome</keyword>
<keyword id="KW-0808">Transferase</keyword>
<proteinExistence type="inferred from homology"/>
<reference key="1">
    <citation type="journal article" date="2009" name="J. Bacteriol.">
        <title>Complete genome sequence and comparative genome analysis of enteropathogenic Escherichia coli O127:H6 strain E2348/69.</title>
        <authorList>
            <person name="Iguchi A."/>
            <person name="Thomson N.R."/>
            <person name="Ogura Y."/>
            <person name="Saunders D."/>
            <person name="Ooka T."/>
            <person name="Henderson I.R."/>
            <person name="Harris D."/>
            <person name="Asadulghani M."/>
            <person name="Kurokawa K."/>
            <person name="Dean P."/>
            <person name="Kenny B."/>
            <person name="Quail M.A."/>
            <person name="Thurston S."/>
            <person name="Dougan G."/>
            <person name="Hayashi T."/>
            <person name="Parkhill J."/>
            <person name="Frankel G."/>
        </authorList>
    </citation>
    <scope>NUCLEOTIDE SEQUENCE [LARGE SCALE GENOMIC DNA]</scope>
    <source>
        <strain>E2348/69 / EPEC</strain>
    </source>
</reference>
<evidence type="ECO:0000255" key="1">
    <source>
        <dbReference type="HAMAP-Rule" id="MF_01166"/>
    </source>
</evidence>
<organism>
    <name type="scientific">Escherichia coli O127:H6 (strain E2348/69 / EPEC)</name>
    <dbReference type="NCBI Taxonomy" id="574521"/>
    <lineage>
        <taxon>Bacteria</taxon>
        <taxon>Pseudomonadati</taxon>
        <taxon>Pseudomonadota</taxon>
        <taxon>Gammaproteobacteria</taxon>
        <taxon>Enterobacterales</taxon>
        <taxon>Enterobacteriaceae</taxon>
        <taxon>Escherichia</taxon>
    </lineage>
</organism>
<comment type="function">
    <text evidence="1">Bifunctional enzyme that catalyzes the oxidative decarboxylation of UDP-glucuronic acid (UDP-GlcUA) to UDP-4-keto-arabinose (UDP-Ara4O) and the addition of a formyl group to UDP-4-amino-4-deoxy-L-arabinose (UDP-L-Ara4N) to form UDP-L-4-formamido-arabinose (UDP-L-Ara4FN). The modified arabinose is attached to lipid A and is required for resistance to polymyxin and cationic antimicrobial peptides.</text>
</comment>
<comment type="catalytic activity">
    <reaction evidence="1">
        <text>UDP-alpha-D-glucuronate + NAD(+) = UDP-beta-L-threo-pentopyranos-4-ulose + CO2 + NADH</text>
        <dbReference type="Rhea" id="RHEA:24702"/>
        <dbReference type="ChEBI" id="CHEBI:16526"/>
        <dbReference type="ChEBI" id="CHEBI:57540"/>
        <dbReference type="ChEBI" id="CHEBI:57945"/>
        <dbReference type="ChEBI" id="CHEBI:58052"/>
        <dbReference type="ChEBI" id="CHEBI:58710"/>
        <dbReference type="EC" id="1.1.1.305"/>
    </reaction>
</comment>
<comment type="catalytic activity">
    <reaction evidence="1">
        <text>UDP-4-amino-4-deoxy-beta-L-arabinose + (6R)-10-formyltetrahydrofolate = UDP-4-deoxy-4-formamido-beta-L-arabinose + (6S)-5,6,7,8-tetrahydrofolate + H(+)</text>
        <dbReference type="Rhea" id="RHEA:24706"/>
        <dbReference type="ChEBI" id="CHEBI:15378"/>
        <dbReference type="ChEBI" id="CHEBI:57453"/>
        <dbReference type="ChEBI" id="CHEBI:58708"/>
        <dbReference type="ChEBI" id="CHEBI:58709"/>
        <dbReference type="ChEBI" id="CHEBI:195366"/>
        <dbReference type="EC" id="2.1.2.13"/>
    </reaction>
</comment>
<comment type="pathway">
    <text evidence="1">Nucleotide-sugar biosynthesis; UDP-4-deoxy-4-formamido-beta-L-arabinose biosynthesis; UDP-4-deoxy-4-formamido-beta-L-arabinose from UDP-alpha-D-glucuronate: step 1/3.</text>
</comment>
<comment type="pathway">
    <text evidence="1">Nucleotide-sugar biosynthesis; UDP-4-deoxy-4-formamido-beta-L-arabinose biosynthesis; UDP-4-deoxy-4-formamido-beta-L-arabinose from UDP-alpha-D-glucuronate: step 3/3.</text>
</comment>
<comment type="pathway">
    <text evidence="1">Bacterial outer membrane biogenesis; lipopolysaccharide biosynthesis.</text>
</comment>
<comment type="subunit">
    <text evidence="1">Homohexamer, formed by a dimer of trimers.</text>
</comment>
<comment type="similarity">
    <text evidence="1">In the N-terminal section; belongs to the Fmt family. UDP-L-Ara4N formyltransferase subfamily.</text>
</comment>
<comment type="similarity">
    <text evidence="1">In the C-terminal section; belongs to the NAD(P)-dependent epimerase/dehydratase family. UDP-glucuronic acid decarboxylase subfamily.</text>
</comment>